<gene>
    <name evidence="1" type="primary">alaS</name>
    <name type="ordered locus">SSP1143</name>
</gene>
<protein>
    <recommendedName>
        <fullName evidence="1">Alanine--tRNA ligase</fullName>
        <ecNumber evidence="1">6.1.1.7</ecNumber>
    </recommendedName>
    <alternativeName>
        <fullName evidence="1">Alanyl-tRNA synthetase</fullName>
        <shortName evidence="1">AlaRS</shortName>
    </alternativeName>
</protein>
<dbReference type="EC" id="6.1.1.7" evidence="1"/>
<dbReference type="EMBL" id="AP008934">
    <property type="protein sequence ID" value="BAE18288.1"/>
    <property type="molecule type" value="Genomic_DNA"/>
</dbReference>
<dbReference type="RefSeq" id="WP_011302968.1">
    <property type="nucleotide sequence ID" value="NZ_MTGA01000038.1"/>
</dbReference>
<dbReference type="SMR" id="Q49Y56"/>
<dbReference type="GeneID" id="3617027"/>
<dbReference type="KEGG" id="ssp:SSP1143"/>
<dbReference type="PATRIC" id="fig|342451.11.peg.1142"/>
<dbReference type="eggNOG" id="COG0013">
    <property type="taxonomic scope" value="Bacteria"/>
</dbReference>
<dbReference type="HOGENOM" id="CLU_004485_1_1_9"/>
<dbReference type="OrthoDB" id="9803884at2"/>
<dbReference type="Proteomes" id="UP000006371">
    <property type="component" value="Chromosome"/>
</dbReference>
<dbReference type="GO" id="GO:0005829">
    <property type="term" value="C:cytosol"/>
    <property type="evidence" value="ECO:0007669"/>
    <property type="project" value="TreeGrafter"/>
</dbReference>
<dbReference type="GO" id="GO:0004813">
    <property type="term" value="F:alanine-tRNA ligase activity"/>
    <property type="evidence" value="ECO:0007669"/>
    <property type="project" value="UniProtKB-UniRule"/>
</dbReference>
<dbReference type="GO" id="GO:0002161">
    <property type="term" value="F:aminoacyl-tRNA deacylase activity"/>
    <property type="evidence" value="ECO:0007669"/>
    <property type="project" value="TreeGrafter"/>
</dbReference>
<dbReference type="GO" id="GO:0005524">
    <property type="term" value="F:ATP binding"/>
    <property type="evidence" value="ECO:0007669"/>
    <property type="project" value="UniProtKB-UniRule"/>
</dbReference>
<dbReference type="GO" id="GO:0140096">
    <property type="term" value="F:catalytic activity, acting on a protein"/>
    <property type="evidence" value="ECO:0007669"/>
    <property type="project" value="UniProtKB-ARBA"/>
</dbReference>
<dbReference type="GO" id="GO:0016740">
    <property type="term" value="F:transferase activity"/>
    <property type="evidence" value="ECO:0007669"/>
    <property type="project" value="UniProtKB-ARBA"/>
</dbReference>
<dbReference type="GO" id="GO:0000049">
    <property type="term" value="F:tRNA binding"/>
    <property type="evidence" value="ECO:0007669"/>
    <property type="project" value="UniProtKB-KW"/>
</dbReference>
<dbReference type="GO" id="GO:0008270">
    <property type="term" value="F:zinc ion binding"/>
    <property type="evidence" value="ECO:0007669"/>
    <property type="project" value="UniProtKB-UniRule"/>
</dbReference>
<dbReference type="GO" id="GO:0006419">
    <property type="term" value="P:alanyl-tRNA aminoacylation"/>
    <property type="evidence" value="ECO:0007669"/>
    <property type="project" value="UniProtKB-UniRule"/>
</dbReference>
<dbReference type="CDD" id="cd00673">
    <property type="entry name" value="AlaRS_core"/>
    <property type="match status" value="1"/>
</dbReference>
<dbReference type="FunFam" id="2.40.30.130:FF:000001">
    <property type="entry name" value="Alanine--tRNA ligase"/>
    <property type="match status" value="1"/>
</dbReference>
<dbReference type="FunFam" id="3.10.310.40:FF:000001">
    <property type="entry name" value="Alanine--tRNA ligase"/>
    <property type="match status" value="1"/>
</dbReference>
<dbReference type="FunFam" id="3.30.54.20:FF:000001">
    <property type="entry name" value="Alanine--tRNA ligase"/>
    <property type="match status" value="1"/>
</dbReference>
<dbReference type="FunFam" id="3.30.930.10:FF:000046">
    <property type="entry name" value="Alanine--tRNA ligase"/>
    <property type="match status" value="1"/>
</dbReference>
<dbReference type="FunFam" id="3.30.980.10:FF:000004">
    <property type="entry name" value="Alanine--tRNA ligase, cytoplasmic"/>
    <property type="match status" value="1"/>
</dbReference>
<dbReference type="Gene3D" id="2.40.30.130">
    <property type="match status" value="1"/>
</dbReference>
<dbReference type="Gene3D" id="3.10.310.40">
    <property type="match status" value="1"/>
</dbReference>
<dbReference type="Gene3D" id="3.30.54.20">
    <property type="match status" value="1"/>
</dbReference>
<dbReference type="Gene3D" id="3.30.930.10">
    <property type="entry name" value="Bira Bifunctional Protein, Domain 2"/>
    <property type="match status" value="1"/>
</dbReference>
<dbReference type="Gene3D" id="3.30.980.10">
    <property type="entry name" value="Threonyl-trna Synthetase, Chain A, domain 2"/>
    <property type="match status" value="1"/>
</dbReference>
<dbReference type="HAMAP" id="MF_00036_B">
    <property type="entry name" value="Ala_tRNA_synth_B"/>
    <property type="match status" value="1"/>
</dbReference>
<dbReference type="InterPro" id="IPR045864">
    <property type="entry name" value="aa-tRNA-synth_II/BPL/LPL"/>
</dbReference>
<dbReference type="InterPro" id="IPR002318">
    <property type="entry name" value="Ala-tRNA-lgiase_IIc"/>
</dbReference>
<dbReference type="InterPro" id="IPR018162">
    <property type="entry name" value="Ala-tRNA-ligase_IIc_anticod-bd"/>
</dbReference>
<dbReference type="InterPro" id="IPR018165">
    <property type="entry name" value="Ala-tRNA-synth_IIc_core"/>
</dbReference>
<dbReference type="InterPro" id="IPR018164">
    <property type="entry name" value="Ala-tRNA-synth_IIc_N"/>
</dbReference>
<dbReference type="InterPro" id="IPR050058">
    <property type="entry name" value="Ala-tRNA_ligase"/>
</dbReference>
<dbReference type="InterPro" id="IPR023033">
    <property type="entry name" value="Ala_tRNA_ligase_euk/bac"/>
</dbReference>
<dbReference type="InterPro" id="IPR003156">
    <property type="entry name" value="DHHA1_dom"/>
</dbReference>
<dbReference type="InterPro" id="IPR018163">
    <property type="entry name" value="Thr/Ala-tRNA-synth_IIc_edit"/>
</dbReference>
<dbReference type="InterPro" id="IPR009000">
    <property type="entry name" value="Transl_B-barrel_sf"/>
</dbReference>
<dbReference type="InterPro" id="IPR012947">
    <property type="entry name" value="tRNA_SAD"/>
</dbReference>
<dbReference type="NCBIfam" id="TIGR00344">
    <property type="entry name" value="alaS"/>
    <property type="match status" value="1"/>
</dbReference>
<dbReference type="PANTHER" id="PTHR11777:SF9">
    <property type="entry name" value="ALANINE--TRNA LIGASE, CYTOPLASMIC"/>
    <property type="match status" value="1"/>
</dbReference>
<dbReference type="PANTHER" id="PTHR11777">
    <property type="entry name" value="ALANYL-TRNA SYNTHETASE"/>
    <property type="match status" value="1"/>
</dbReference>
<dbReference type="Pfam" id="PF02272">
    <property type="entry name" value="DHHA1"/>
    <property type="match status" value="1"/>
</dbReference>
<dbReference type="Pfam" id="PF01411">
    <property type="entry name" value="tRNA-synt_2c"/>
    <property type="match status" value="1"/>
</dbReference>
<dbReference type="Pfam" id="PF07973">
    <property type="entry name" value="tRNA_SAD"/>
    <property type="match status" value="1"/>
</dbReference>
<dbReference type="PRINTS" id="PR00980">
    <property type="entry name" value="TRNASYNTHALA"/>
</dbReference>
<dbReference type="SMART" id="SM00863">
    <property type="entry name" value="tRNA_SAD"/>
    <property type="match status" value="1"/>
</dbReference>
<dbReference type="SUPFAM" id="SSF55681">
    <property type="entry name" value="Class II aaRS and biotin synthetases"/>
    <property type="match status" value="1"/>
</dbReference>
<dbReference type="SUPFAM" id="SSF101353">
    <property type="entry name" value="Putative anticodon-binding domain of alanyl-tRNA synthetase (AlaRS)"/>
    <property type="match status" value="1"/>
</dbReference>
<dbReference type="SUPFAM" id="SSF55186">
    <property type="entry name" value="ThrRS/AlaRS common domain"/>
    <property type="match status" value="1"/>
</dbReference>
<dbReference type="SUPFAM" id="SSF50447">
    <property type="entry name" value="Translation proteins"/>
    <property type="match status" value="1"/>
</dbReference>
<dbReference type="PROSITE" id="PS50860">
    <property type="entry name" value="AA_TRNA_LIGASE_II_ALA"/>
    <property type="match status" value="1"/>
</dbReference>
<sequence>MKNLKASEIRQNFIDYFVEKGHMVEPSAPLVPIDDDSLLWINSGVATLKKYFDGRETPRKPRIVNSQKAIRTNDIENVGFTARHHTFFEMLGNFSIGDYFKQEAIEFAWEFLTSEKWMAMEPKLLYVTIHPEDKEAYRIWNEDIGLEESRIIRIEGNFWDIGEGPSGPNTEIFYDRGEDFGQDDPAEEMYPGGENERFLEVWNLVFSEFNHNKDHTYTPLPNKNIDTGMGLERMASLAQNVRTNYETDLFMPIIHEVEKVSGKTYLENDNYDVAFKVIADHIRTIAFAIADGALPANEGRGYVLRRLLRRAVRFSQSLDINEPFMYRLVDIVADIMEPYYPNVKEKADFIKRVIKSEEERFHETLEEGLAILNNLVAQAKTSTHEISGKDAFKLYDTYGFPVELTEEIATQENLSIDMQTFEEEMQQQRDRARQARQNSQSMQVQSEVLKKITTDSTFVGYDVMDKASVITDIIQNGELVESAEAGETIYFILRETPFYAVSGGQVADQGTISNENFEIAVTEVTKAPNGQNLHKGEIQFGTVKKNAEVSASVNHKERRSIKKNHSATHLLHAALKEVLGDHVNQAGSLVEADRLRFDFSHFGPMTQEEIDTVERRVNEEIWNSIEVDIQEMPISEAKQLGAMALFGEKYGEIVRVVNMAPFSIELCGGIHVNNTAEIGLFKIVSESGTGAGVRRIEALTGKSAFLYLETIQSQFNAVKSQVKVKSDDQVLEKIVHMQDEEKELTKQLEQKNKEVTSLKMGDITNQVEEINGLKVLATEVDVPNAKAIRETMDDFKSKLQDTVIVLISNIDGKVSLVATVPKALTDKVKAGDIIKNMAPVVGGKGGGRPDMAQGGGTEPKNITESLRFIKDYIKSL</sequence>
<comment type="function">
    <text evidence="1">Catalyzes the attachment of alanine to tRNA(Ala) in a two-step reaction: alanine is first activated by ATP to form Ala-AMP and then transferred to the acceptor end of tRNA(Ala). Also edits incorrectly charged Ser-tRNA(Ala) and Gly-tRNA(Ala) via its editing domain.</text>
</comment>
<comment type="catalytic activity">
    <reaction evidence="1">
        <text>tRNA(Ala) + L-alanine + ATP = L-alanyl-tRNA(Ala) + AMP + diphosphate</text>
        <dbReference type="Rhea" id="RHEA:12540"/>
        <dbReference type="Rhea" id="RHEA-COMP:9657"/>
        <dbReference type="Rhea" id="RHEA-COMP:9923"/>
        <dbReference type="ChEBI" id="CHEBI:30616"/>
        <dbReference type="ChEBI" id="CHEBI:33019"/>
        <dbReference type="ChEBI" id="CHEBI:57972"/>
        <dbReference type="ChEBI" id="CHEBI:78442"/>
        <dbReference type="ChEBI" id="CHEBI:78497"/>
        <dbReference type="ChEBI" id="CHEBI:456215"/>
        <dbReference type="EC" id="6.1.1.7"/>
    </reaction>
</comment>
<comment type="cofactor">
    <cofactor evidence="1">
        <name>Zn(2+)</name>
        <dbReference type="ChEBI" id="CHEBI:29105"/>
    </cofactor>
    <text evidence="1">Binds 1 zinc ion per subunit.</text>
</comment>
<comment type="subcellular location">
    <subcellularLocation>
        <location evidence="1">Cytoplasm</location>
    </subcellularLocation>
</comment>
<comment type="domain">
    <text evidence="1">Consists of three domains; the N-terminal catalytic domain, the editing domain and the C-terminal C-Ala domain. The editing domain removes incorrectly charged amino acids, while the C-Ala domain, along with tRNA(Ala), serves as a bridge to cooperatively bring together the editing and aminoacylation centers thus stimulating deacylation of misacylated tRNAs.</text>
</comment>
<comment type="similarity">
    <text evidence="1">Belongs to the class-II aminoacyl-tRNA synthetase family.</text>
</comment>
<accession>Q49Y56</accession>
<proteinExistence type="inferred from homology"/>
<name>SYA_STAS1</name>
<reference key="1">
    <citation type="journal article" date="2005" name="Proc. Natl. Acad. Sci. U.S.A.">
        <title>Whole genome sequence of Staphylococcus saprophyticus reveals the pathogenesis of uncomplicated urinary tract infection.</title>
        <authorList>
            <person name="Kuroda M."/>
            <person name="Yamashita A."/>
            <person name="Hirakawa H."/>
            <person name="Kumano M."/>
            <person name="Morikawa K."/>
            <person name="Higashide M."/>
            <person name="Maruyama A."/>
            <person name="Inose Y."/>
            <person name="Matoba K."/>
            <person name="Toh H."/>
            <person name="Kuhara S."/>
            <person name="Hattori M."/>
            <person name="Ohta T."/>
        </authorList>
    </citation>
    <scope>NUCLEOTIDE SEQUENCE [LARGE SCALE GENOMIC DNA]</scope>
    <source>
        <strain>ATCC 15305 / DSM 20229 / NCIMB 8711 / NCTC 7292 / S-41</strain>
    </source>
</reference>
<feature type="chain" id="PRO_0000075210" description="Alanine--tRNA ligase">
    <location>
        <begin position="1"/>
        <end position="876"/>
    </location>
</feature>
<feature type="binding site" evidence="1">
    <location>
        <position position="565"/>
    </location>
    <ligand>
        <name>Zn(2+)</name>
        <dbReference type="ChEBI" id="CHEBI:29105"/>
    </ligand>
</feature>
<feature type="binding site" evidence="1">
    <location>
        <position position="569"/>
    </location>
    <ligand>
        <name>Zn(2+)</name>
        <dbReference type="ChEBI" id="CHEBI:29105"/>
    </ligand>
</feature>
<feature type="binding site" evidence="1">
    <location>
        <position position="667"/>
    </location>
    <ligand>
        <name>Zn(2+)</name>
        <dbReference type="ChEBI" id="CHEBI:29105"/>
    </ligand>
</feature>
<feature type="binding site" evidence="1">
    <location>
        <position position="671"/>
    </location>
    <ligand>
        <name>Zn(2+)</name>
        <dbReference type="ChEBI" id="CHEBI:29105"/>
    </ligand>
</feature>
<keyword id="KW-0030">Aminoacyl-tRNA synthetase</keyword>
<keyword id="KW-0067">ATP-binding</keyword>
<keyword id="KW-0963">Cytoplasm</keyword>
<keyword id="KW-0436">Ligase</keyword>
<keyword id="KW-0479">Metal-binding</keyword>
<keyword id="KW-0547">Nucleotide-binding</keyword>
<keyword id="KW-0648">Protein biosynthesis</keyword>
<keyword id="KW-1185">Reference proteome</keyword>
<keyword id="KW-0694">RNA-binding</keyword>
<keyword id="KW-0820">tRNA-binding</keyword>
<keyword id="KW-0862">Zinc</keyword>
<organism>
    <name type="scientific">Staphylococcus saprophyticus subsp. saprophyticus (strain ATCC 15305 / DSM 20229 / NCIMB 8711 / NCTC 7292 / S-41)</name>
    <dbReference type="NCBI Taxonomy" id="342451"/>
    <lineage>
        <taxon>Bacteria</taxon>
        <taxon>Bacillati</taxon>
        <taxon>Bacillota</taxon>
        <taxon>Bacilli</taxon>
        <taxon>Bacillales</taxon>
        <taxon>Staphylococcaceae</taxon>
        <taxon>Staphylococcus</taxon>
    </lineage>
</organism>
<evidence type="ECO:0000255" key="1">
    <source>
        <dbReference type="HAMAP-Rule" id="MF_00036"/>
    </source>
</evidence>